<sequence>MFEKTNRMNLLFDFYQELLTTKQKAYVSFYYLDDYSLGEIAEEFEVSRQAIYDNIKRTEESLEKYEEKLGMLKKYQQREKLFSELEAQLTKKNFLDEQVKDTLEQLKNID</sequence>
<proteinExistence type="inferred from homology"/>
<evidence type="ECO:0000255" key="1">
    <source>
        <dbReference type="HAMAP-Rule" id="MF_00245"/>
    </source>
</evidence>
<name>Y1821_LISW6</name>
<dbReference type="EMBL" id="AM263198">
    <property type="protein sequence ID" value="CAK21239.1"/>
    <property type="molecule type" value="Genomic_DNA"/>
</dbReference>
<dbReference type="RefSeq" id="WP_011702593.1">
    <property type="nucleotide sequence ID" value="NC_008555.1"/>
</dbReference>
<dbReference type="SMR" id="A0AJQ7"/>
<dbReference type="STRING" id="386043.lwe1821"/>
<dbReference type="GeneID" id="61189722"/>
<dbReference type="KEGG" id="lwe:lwe1821"/>
<dbReference type="eggNOG" id="COG2739">
    <property type="taxonomic scope" value="Bacteria"/>
</dbReference>
<dbReference type="HOGENOM" id="CLU_129218_1_0_9"/>
<dbReference type="OrthoDB" id="6392at2"/>
<dbReference type="Proteomes" id="UP000000779">
    <property type="component" value="Chromosome"/>
</dbReference>
<dbReference type="Gene3D" id="1.10.10.10">
    <property type="entry name" value="Winged helix-like DNA-binding domain superfamily/Winged helix DNA-binding domain"/>
    <property type="match status" value="1"/>
</dbReference>
<dbReference type="HAMAP" id="MF_00245">
    <property type="entry name" value="UPF0122"/>
    <property type="match status" value="1"/>
</dbReference>
<dbReference type="InterPro" id="IPR013324">
    <property type="entry name" value="RNA_pol_sigma_r3/r4-like"/>
</dbReference>
<dbReference type="InterPro" id="IPR007394">
    <property type="entry name" value="UPF0122"/>
</dbReference>
<dbReference type="InterPro" id="IPR054831">
    <property type="entry name" value="UPF0122_fam_protein"/>
</dbReference>
<dbReference type="InterPro" id="IPR036388">
    <property type="entry name" value="WH-like_DNA-bd_sf"/>
</dbReference>
<dbReference type="NCBIfam" id="NF001068">
    <property type="entry name" value="PRK00118.1-4"/>
    <property type="match status" value="1"/>
</dbReference>
<dbReference type="NCBIfam" id="NF001069">
    <property type="entry name" value="PRK00118.1-5"/>
    <property type="match status" value="1"/>
</dbReference>
<dbReference type="NCBIfam" id="NF001070">
    <property type="entry name" value="PRK00118.1-6"/>
    <property type="match status" value="1"/>
</dbReference>
<dbReference type="NCBIfam" id="NF045758">
    <property type="entry name" value="YlxM"/>
    <property type="match status" value="1"/>
</dbReference>
<dbReference type="PANTHER" id="PTHR40083">
    <property type="entry name" value="UPF0122 PROTEIN CBO2450/CLC_2298"/>
    <property type="match status" value="1"/>
</dbReference>
<dbReference type="PANTHER" id="PTHR40083:SF1">
    <property type="entry name" value="UPF0122 PROTEIN YLXM"/>
    <property type="match status" value="1"/>
</dbReference>
<dbReference type="Pfam" id="PF04297">
    <property type="entry name" value="UPF0122"/>
    <property type="match status" value="1"/>
</dbReference>
<dbReference type="SUPFAM" id="SSF88659">
    <property type="entry name" value="Sigma3 and sigma4 domains of RNA polymerase sigma factors"/>
    <property type="match status" value="1"/>
</dbReference>
<organism>
    <name type="scientific">Listeria welshimeri serovar 6b (strain ATCC 35897 / DSM 20650 / CCUG 15529 / CIP 8149 / NCTC 11857 / SLCC 5334 / V8)</name>
    <dbReference type="NCBI Taxonomy" id="386043"/>
    <lineage>
        <taxon>Bacteria</taxon>
        <taxon>Bacillati</taxon>
        <taxon>Bacillota</taxon>
        <taxon>Bacilli</taxon>
        <taxon>Bacillales</taxon>
        <taxon>Listeriaceae</taxon>
        <taxon>Listeria</taxon>
    </lineage>
</organism>
<protein>
    <recommendedName>
        <fullName evidence="1">UPF0122 protein lwe1821</fullName>
    </recommendedName>
</protein>
<gene>
    <name type="ordered locus">lwe1821</name>
</gene>
<feature type="chain" id="PRO_1000012534" description="UPF0122 protein lwe1821">
    <location>
        <begin position="1"/>
        <end position="110"/>
    </location>
</feature>
<comment type="function">
    <text evidence="1">Might take part in the signal recognition particle (SRP) pathway. This is inferred from the conservation of its genetic proximity to ftsY/ffh. May be a regulatory protein.</text>
</comment>
<comment type="similarity">
    <text evidence="1">Belongs to the UPF0122 family.</text>
</comment>
<reference key="1">
    <citation type="journal article" date="2006" name="J. Bacteriol.">
        <title>Whole-genome sequence of Listeria welshimeri reveals common steps in genome reduction with Listeria innocua as compared to Listeria monocytogenes.</title>
        <authorList>
            <person name="Hain T."/>
            <person name="Steinweg C."/>
            <person name="Kuenne C.T."/>
            <person name="Billion A."/>
            <person name="Ghai R."/>
            <person name="Chatterjee S.S."/>
            <person name="Domann E."/>
            <person name="Kaerst U."/>
            <person name="Goesmann A."/>
            <person name="Bekel T."/>
            <person name="Bartels D."/>
            <person name="Kaiser O."/>
            <person name="Meyer F."/>
            <person name="Puehler A."/>
            <person name="Weisshaar B."/>
            <person name="Wehland J."/>
            <person name="Liang C."/>
            <person name="Dandekar T."/>
            <person name="Lampidis R."/>
            <person name="Kreft J."/>
            <person name="Goebel W."/>
            <person name="Chakraborty T."/>
        </authorList>
    </citation>
    <scope>NUCLEOTIDE SEQUENCE [LARGE SCALE GENOMIC DNA]</scope>
    <source>
        <strain>ATCC 35897 / DSM 20650 / CCUG 15529 / CIP 8149 / NCTC 11857 / SLCC 5334 / V8</strain>
    </source>
</reference>
<accession>A0AJQ7</accession>